<name>SETB1_DROME</name>
<feature type="chain" id="PRO_0000281822" description="Histone-lysine N-methyltransferase eggless">
    <location>
        <begin position="1"/>
        <end position="1262"/>
    </location>
</feature>
<feature type="domain" description="Tudor 1">
    <location>
        <begin position="529"/>
        <end position="602"/>
    </location>
</feature>
<feature type="domain" description="Tudor 2">
    <location>
        <begin position="629"/>
        <end position="686"/>
    </location>
</feature>
<feature type="domain" description="MBD" evidence="6">
    <location>
        <begin position="818"/>
        <end position="884"/>
    </location>
</feature>
<feature type="domain" description="Pre-SET" evidence="4">
    <location>
        <begin position="946"/>
        <end position="1018"/>
    </location>
</feature>
<feature type="domain" description="SET" evidence="5">
    <location>
        <begin position="1021"/>
        <end position="1237"/>
    </location>
</feature>
<feature type="domain" description="Post-SET" evidence="3">
    <location>
        <begin position="1246"/>
        <end position="1262"/>
    </location>
</feature>
<feature type="region of interest" description="Disordered" evidence="7">
    <location>
        <begin position="1"/>
        <end position="194"/>
    </location>
</feature>
<feature type="region of interest" description="Disordered" evidence="7">
    <location>
        <begin position="743"/>
        <end position="764"/>
    </location>
</feature>
<feature type="region of interest" description="Disordered" evidence="7">
    <location>
        <begin position="1086"/>
        <end position="1148"/>
    </location>
</feature>
<feature type="coiled-coil region" evidence="2">
    <location>
        <begin position="353"/>
        <end position="420"/>
    </location>
</feature>
<feature type="compositionally biased region" description="Basic and acidic residues" evidence="7">
    <location>
        <begin position="26"/>
        <end position="41"/>
    </location>
</feature>
<feature type="compositionally biased region" description="Basic and acidic residues" evidence="7">
    <location>
        <begin position="50"/>
        <end position="61"/>
    </location>
</feature>
<feature type="compositionally biased region" description="Basic and acidic residues" evidence="7">
    <location>
        <begin position="81"/>
        <end position="99"/>
    </location>
</feature>
<feature type="compositionally biased region" description="Low complexity" evidence="7">
    <location>
        <begin position="157"/>
        <end position="166"/>
    </location>
</feature>
<feature type="compositionally biased region" description="Basic and acidic residues" evidence="7">
    <location>
        <begin position="167"/>
        <end position="179"/>
    </location>
</feature>
<feature type="compositionally biased region" description="Basic and acidic residues" evidence="7">
    <location>
        <begin position="1086"/>
        <end position="1097"/>
    </location>
</feature>
<feature type="compositionally biased region" description="Acidic residues" evidence="7">
    <location>
        <begin position="1098"/>
        <end position="1113"/>
    </location>
</feature>
<feature type="compositionally biased region" description="Low complexity" evidence="7">
    <location>
        <begin position="1129"/>
        <end position="1141"/>
    </location>
</feature>
<feature type="binding site" evidence="1">
    <location>
        <position position="948"/>
    </location>
    <ligand>
        <name>Zn(2+)</name>
        <dbReference type="ChEBI" id="CHEBI:29105"/>
        <label>1</label>
    </ligand>
</feature>
<feature type="binding site" evidence="1">
    <location>
        <position position="948"/>
    </location>
    <ligand>
        <name>Zn(2+)</name>
        <dbReference type="ChEBI" id="CHEBI:29105"/>
        <label>2</label>
    </ligand>
</feature>
<feature type="binding site" evidence="1">
    <location>
        <position position="950"/>
    </location>
    <ligand>
        <name>Zn(2+)</name>
        <dbReference type="ChEBI" id="CHEBI:29105"/>
        <label>1</label>
    </ligand>
</feature>
<feature type="binding site" evidence="1">
    <location>
        <position position="954"/>
    </location>
    <ligand>
        <name>Zn(2+)</name>
        <dbReference type="ChEBI" id="CHEBI:29105"/>
        <label>1</label>
    </ligand>
</feature>
<feature type="binding site" evidence="1">
    <location>
        <position position="954"/>
    </location>
    <ligand>
        <name>Zn(2+)</name>
        <dbReference type="ChEBI" id="CHEBI:29105"/>
        <label>3</label>
    </ligand>
</feature>
<feature type="binding site" evidence="1">
    <location>
        <position position="960"/>
    </location>
    <ligand>
        <name>Zn(2+)</name>
        <dbReference type="ChEBI" id="CHEBI:29105"/>
        <label>1</label>
    </ligand>
</feature>
<feature type="binding site" evidence="1">
    <location>
        <position position="962"/>
    </location>
    <ligand>
        <name>Zn(2+)</name>
        <dbReference type="ChEBI" id="CHEBI:29105"/>
        <label>2</label>
    </ligand>
</feature>
<feature type="binding site" evidence="1">
    <location>
        <position position="1000"/>
    </location>
    <ligand>
        <name>Zn(2+)</name>
        <dbReference type="ChEBI" id="CHEBI:29105"/>
        <label>2</label>
    </ligand>
</feature>
<feature type="binding site" evidence="1">
    <location>
        <position position="1000"/>
    </location>
    <ligand>
        <name>Zn(2+)</name>
        <dbReference type="ChEBI" id="CHEBI:29105"/>
        <label>3</label>
    </ligand>
</feature>
<feature type="binding site" evidence="1">
    <location>
        <position position="1004"/>
    </location>
    <ligand>
        <name>Zn(2+)</name>
        <dbReference type="ChEBI" id="CHEBI:29105"/>
        <label>2</label>
    </ligand>
</feature>
<feature type="binding site" evidence="1">
    <location>
        <position position="1006"/>
    </location>
    <ligand>
        <name>Zn(2+)</name>
        <dbReference type="ChEBI" id="CHEBI:29105"/>
        <label>3</label>
    </ligand>
</feature>
<feature type="binding site" evidence="1">
    <location>
        <position position="1010"/>
    </location>
    <ligand>
        <name>Zn(2+)</name>
        <dbReference type="ChEBI" id="CHEBI:29105"/>
        <label>3</label>
    </ligand>
</feature>
<feature type="binding site" evidence="1">
    <location>
        <begin position="1031"/>
        <end position="1033"/>
    </location>
    <ligand>
        <name>S-adenosyl-L-methionine</name>
        <dbReference type="ChEBI" id="CHEBI:59789"/>
    </ligand>
</feature>
<feature type="binding site" evidence="5">
    <location>
        <position position="1069"/>
    </location>
    <ligand>
        <name>S-adenosyl-L-methionine</name>
        <dbReference type="ChEBI" id="CHEBI:59789"/>
    </ligand>
</feature>
<feature type="binding site" evidence="5">
    <location>
        <position position="1071"/>
    </location>
    <ligand>
        <name>S-adenosyl-L-methionine</name>
        <dbReference type="ChEBI" id="CHEBI:59789"/>
    </ligand>
</feature>
<feature type="binding site" evidence="5">
    <location>
        <position position="1191"/>
    </location>
    <ligand>
        <name>S-adenosyl-L-methionine</name>
        <dbReference type="ChEBI" id="CHEBI:59789"/>
    </ligand>
</feature>
<feature type="binding site" evidence="1">
    <location>
        <begin position="1194"/>
        <end position="1195"/>
    </location>
    <ligand>
        <name>S-adenosyl-L-methionine</name>
        <dbReference type="ChEBI" id="CHEBI:59789"/>
    </ligand>
</feature>
<feature type="binding site" evidence="1">
    <location>
        <position position="1197"/>
    </location>
    <ligand>
        <name>Zn(2+)</name>
        <dbReference type="ChEBI" id="CHEBI:29105"/>
        <label>4</label>
    </ligand>
</feature>
<feature type="binding site" evidence="1">
    <location>
        <position position="1250"/>
    </location>
    <ligand>
        <name>Zn(2+)</name>
        <dbReference type="ChEBI" id="CHEBI:29105"/>
        <label>4</label>
    </ligand>
</feature>
<feature type="binding site" evidence="1">
    <location>
        <position position="1252"/>
    </location>
    <ligand>
        <name>Zn(2+)</name>
        <dbReference type="ChEBI" id="CHEBI:29105"/>
        <label>4</label>
    </ligand>
</feature>
<feature type="binding site" evidence="1">
    <location>
        <position position="1257"/>
    </location>
    <ligand>
        <name>Zn(2+)</name>
        <dbReference type="ChEBI" id="CHEBI:29105"/>
        <label>4</label>
    </ligand>
</feature>
<feature type="modified residue" description="Phosphoserine" evidence="9">
    <location>
        <position position="215"/>
    </location>
</feature>
<feature type="modified residue" description="Phosphothreonine" evidence="9">
    <location>
        <position position="217"/>
    </location>
</feature>
<feature type="strand" evidence="15">
    <location>
        <begin position="466"/>
        <end position="473"/>
    </location>
</feature>
<feature type="strand" evidence="15">
    <location>
        <begin position="478"/>
        <end position="490"/>
    </location>
</feature>
<feature type="strand" evidence="15">
    <location>
        <begin position="496"/>
        <end position="506"/>
    </location>
</feature>
<feature type="strand" evidence="15">
    <location>
        <begin position="512"/>
        <end position="515"/>
    </location>
</feature>
<feature type="helix" evidence="15">
    <location>
        <begin position="517"/>
        <end position="519"/>
    </location>
</feature>
<feature type="strand" evidence="15">
    <location>
        <begin position="520"/>
        <end position="524"/>
    </location>
</feature>
<feature type="strand" evidence="15">
    <location>
        <begin position="535"/>
        <end position="540"/>
    </location>
</feature>
<feature type="strand" evidence="15">
    <location>
        <begin position="557"/>
        <end position="565"/>
    </location>
</feature>
<feature type="helix" evidence="15">
    <location>
        <begin position="569"/>
        <end position="571"/>
    </location>
</feature>
<feature type="strand" evidence="15">
    <location>
        <begin position="575"/>
        <end position="579"/>
    </location>
</feature>
<feature type="strand" evidence="15">
    <location>
        <begin position="584"/>
        <end position="587"/>
    </location>
</feature>
<feature type="helix" evidence="15">
    <location>
        <begin position="589"/>
        <end position="591"/>
    </location>
</feature>
<feature type="strand" evidence="15">
    <location>
        <begin position="592"/>
        <end position="596"/>
    </location>
</feature>
<feature type="helix" evidence="15">
    <location>
        <begin position="602"/>
        <end position="605"/>
    </location>
</feature>
<feature type="turn" evidence="15">
    <location>
        <begin position="608"/>
        <end position="610"/>
    </location>
</feature>
<feature type="helix" evidence="15">
    <location>
        <begin position="611"/>
        <end position="619"/>
    </location>
</feature>
<feature type="strand" evidence="15">
    <location>
        <begin position="635"/>
        <end position="640"/>
    </location>
</feature>
<feature type="strand" evidence="15">
    <location>
        <begin position="643"/>
        <end position="653"/>
    </location>
</feature>
<feature type="strand" evidence="15">
    <location>
        <begin position="656"/>
        <end position="661"/>
    </location>
</feature>
<feature type="strand" evidence="15">
    <location>
        <begin position="668"/>
        <end position="672"/>
    </location>
</feature>
<feature type="helix" evidence="15">
    <location>
        <begin position="679"/>
        <end position="686"/>
    </location>
</feature>
<proteinExistence type="evidence at protein level"/>
<comment type="function">
    <text evidence="8">Histone methyltransferase that specifically trimethylates 'Lys-10' of histone H3 (H3K9me3) in ovary (PubMed:17164421). H3K9me3 represents a specific tag for epigenetic transcriptional repression by recruiting Su(var)205/HP1 to methylated histones (PubMed:17164421). Plays a central role during oogenesis (PubMed:17164421).</text>
</comment>
<comment type="catalytic activity">
    <reaction>
        <text>L-lysyl(9)-[histone H3] + 3 S-adenosyl-L-methionine = N(6),N(6),N(6)-trimethyl-L-lysyl(9)-[histone H3] + 3 S-adenosyl-L-homocysteine + 3 H(+)</text>
        <dbReference type="Rhea" id="RHEA:60276"/>
        <dbReference type="Rhea" id="RHEA-COMP:15538"/>
        <dbReference type="Rhea" id="RHEA-COMP:15546"/>
        <dbReference type="ChEBI" id="CHEBI:15378"/>
        <dbReference type="ChEBI" id="CHEBI:29969"/>
        <dbReference type="ChEBI" id="CHEBI:57856"/>
        <dbReference type="ChEBI" id="CHEBI:59789"/>
        <dbReference type="ChEBI" id="CHEBI:61961"/>
        <dbReference type="EC" id="2.1.1.355"/>
    </reaction>
</comment>
<comment type="interaction">
    <interactant intactId="EBI-140830">
        <id>Q32KD2</id>
    </interactant>
    <interactant intactId="EBI-98396">
        <id>Q8MRI3</id>
        <label>CG14464</label>
    </interactant>
    <organismsDiffer>false</organismsDiffer>
    <experiments>2</experiments>
</comment>
<comment type="interaction">
    <interactant intactId="EBI-140830">
        <id>Q32KD2</id>
    </interactant>
    <interactant intactId="EBI-155974">
        <id>Q9W123</id>
        <label>Pof</label>
    </interactant>
    <organismsDiffer>false</organismsDiffer>
    <experiments>2</experiments>
</comment>
<comment type="subcellular location">
    <subcellularLocation>
        <location evidence="8">Nucleus</location>
    </subcellularLocation>
    <subcellularLocation>
        <location evidence="12">Chromosome</location>
    </subcellularLocation>
</comment>
<comment type="tissue specificity">
    <text evidence="8">Expressed in ovary (at protein level).</text>
</comment>
<comment type="developmental stage">
    <text evidence="8">Present most strongly at early stages of oogenesis, in germ cells in the germarium. Present in germ stem cells and dividing germline cyst cells. Weakly or not expressed in somatic cells at the tip of the germarium, including the terminal filament, inner sheath cells, or cap cells, but it is present at low levels in somatic cells in regions 2 and 3 of the germarium, including the prefollicular cells and the follicle cells of stage 1 egg chambers. Soon after egg chambers bud off the germarium, levels increase in the follicle cells. By mid-oogenesis it decreases in the nurse cells, while levels continued to increase in the follicle cells (at protein level).</text>
</comment>
<comment type="domain">
    <text evidence="1">In the pre-SET domain, Cys residues bind 3 zinc ions that are arranged in a triangular cluster; some of these Cys residues contribute to the binding of two zinc ions within the cluster.</text>
</comment>
<comment type="disruption phenotype">
    <text evidence="8 10">Oogenesis arrests at early stages (PubMed:17164421). This arrest is accompanied by reduced proliferation of somatic cells required for egg chamber formation, and by apoptosis in both germ and somatic cell populations (PubMed:17164421). RNAi-mediated knockdown in germ cells of adult females severely impairs the hatching rate of offspring; this phenotype is partially reversed in the presence of RNAi-mediated knockdown of Kdm3 (PubMed:37027460).</text>
</comment>
<comment type="similarity">
    <text evidence="5">Belongs to the class V-like SAM-binding methyltransferase superfamily. Histone-lysine methyltransferase family. Suvar3-9 subfamily.</text>
</comment>
<comment type="sequence caution" evidence="11">
    <conflict type="erroneous initiation">
        <sequence resource="EMBL-CDS" id="AAK93223"/>
    </conflict>
</comment>
<comment type="sequence caution" evidence="11">
    <conflict type="erroneous initiation">
        <sequence resource="EMBL-CDS" id="AAN71064"/>
    </conflict>
</comment>
<comment type="sequence caution" evidence="11">
    <conflict type="erroneous initiation">
        <sequence resource="EMBL-CDS" id="ABC86335"/>
    </conflict>
</comment>
<protein>
    <recommendedName>
        <fullName>Histone-lysine N-methyltransferase eggless</fullName>
        <ecNumber>2.1.1.355</ecNumber>
    </recommendedName>
    <alternativeName>
        <fullName>SETDB1 homolog</fullName>
    </alternativeName>
</protein>
<sequence length="1262" mass="141946">MSGQPTAVDCLESSGSTVEDVQETPASREKSYGLPVRKGENSLESPAEQAAKDVEIEELTHSEAIAATGSTRKQCPYGGKAPDEPGKLADESEDRKGENTKAIASSPVLVAVDSDSSVELIESPVKFSSANESEKDPPKPDAVNEAAAKEAEEMTDSSISSPTSESFPEKDEKTNKENEQEPPGMEVDQDVEESISRPAEEYKIENTLKGHKRISLTEIEEHKIVDKKDDVLEVELEKGTAPKAAEDEKLNALLSDGDVFYDKECVNCNCTKLHKQYVLANMATLNFYQVLRKSSKQQFLCMGCHDTAMDLYEEYAGQLMAKQPLLLKDFHQDHADFVALDSSDEEEEEKQPEKSDFSKNKLQLIEDELDDAIKNVLNKVDFTAQLSWSKTILQAKADHLERQFALADVELEKVQTTADKMHCALYNSCPVAHKHLPTLDIEPSDYVHEVPPPGEIVRPPIQLGETYYAVKNKAIASWVSIKVIEFTESTAINGNTMKSYKIRYLNTPYQMIKTVTAKHIAYFEPPPVRLTIGTRVIAYFDGTTLSRGKDKGVVQSAFYPGIIAEPLKQANRYRYLIFYDDGYTQYVPHRDVRLVCQASEKVWEDVHAASRDFIQKYVEKYSVDRPMVQCTRGQSMTTESNGTWLYARVIDIDCSLVLMQFEGDKNHTEWIYRGSLRLGPVFRETQNNMNSSSAQQLRVPRRTEPFIRYTKEMESSSKVNQQMRAFARKSSASAQNNALAAASSAATPAGGRTNAGGVSTSNSASAVRHLNNSTIYVDDENRPKGHVVYFTAKRNLPPKMYKCHECSPNCLFKIVHRLDSYSPLAKPLLSGWERLVMRQKTKKSVVYKGPCGKSLRSLAEVHRYLRATENVLNVDNFDFTPDLKCLAEYSIDPSIVKDTDISKGQEKMAIPLVNYYDNTLPPPCTYAKQRIPTEGVHLNLDEEFLLCCDCEDDCSDKSKCACWQLTVAGVRYCNPKKPIEEIGYQYKRLHEHVPTGIYECNSRCKCKKNCLNRVVQFSLEMKLQVFKTSNRGWGLRCVNDIPKGAFICIYAGHLLTETMANEGGQDAGDEYFADLDYIEVAEQLKEGYESEVDHSDPDAEEDNGGPDAEDDDDFRPNYHYQRKIKRSSRSGSTQNSSTQSSELDSQERAVINFNPNADLDETVRENSVRRLFGKDEAPYIMDAKTTGNLGRYFNHSCSPNLFVQNVFVDTHDLRFPWVAFFSAAHIRSGTELTWNYNYEVGVVPGKVLYCQCGAPNCRLRLL</sequence>
<dbReference type="EC" id="2.1.1.355"/>
<dbReference type="EMBL" id="AE013599">
    <property type="protein sequence ID" value="AAF47268.3"/>
    <property type="molecule type" value="Genomic_DNA"/>
</dbReference>
<dbReference type="EMBL" id="BT023947">
    <property type="protein sequence ID" value="ABB36451.1"/>
    <property type="molecule type" value="mRNA"/>
</dbReference>
<dbReference type="EMBL" id="BT024273">
    <property type="protein sequence ID" value="ABC86335.1"/>
    <property type="status" value="ALT_INIT"/>
    <property type="molecule type" value="mRNA"/>
</dbReference>
<dbReference type="EMBL" id="AY051799">
    <property type="protein sequence ID" value="AAK93223.1"/>
    <property type="status" value="ALT_INIT"/>
    <property type="molecule type" value="mRNA"/>
</dbReference>
<dbReference type="EMBL" id="BT001309">
    <property type="protein sequence ID" value="AAN71064.2"/>
    <property type="status" value="ALT_INIT"/>
    <property type="molecule type" value="mRNA"/>
</dbReference>
<dbReference type="RefSeq" id="NP_611966.3">
    <property type="nucleotide sequence ID" value="NM_138122.5"/>
</dbReference>
<dbReference type="PDB" id="7UVE">
    <property type="method" value="X-ray"/>
    <property type="resolution" value="2.30 A"/>
    <property type="chains" value="A=444-700"/>
</dbReference>
<dbReference type="PDB" id="7UW8">
    <property type="method" value="X-ray"/>
    <property type="resolution" value="2.50 A"/>
    <property type="chains" value="A=444-700"/>
</dbReference>
<dbReference type="PDBsum" id="7UVE"/>
<dbReference type="PDBsum" id="7UW8"/>
<dbReference type="SMR" id="Q32KD2"/>
<dbReference type="BioGRID" id="63532">
    <property type="interactions" value="37"/>
</dbReference>
<dbReference type="DIP" id="DIP-46503N"/>
<dbReference type="FunCoup" id="Q32KD2">
    <property type="interactions" value="1781"/>
</dbReference>
<dbReference type="IntAct" id="Q32KD2">
    <property type="interactions" value="9"/>
</dbReference>
<dbReference type="STRING" id="7227.FBpp0111689"/>
<dbReference type="GlyGen" id="Q32KD2">
    <property type="glycosylation" value="1 site"/>
</dbReference>
<dbReference type="iPTMnet" id="Q32KD2"/>
<dbReference type="PaxDb" id="7227-FBpp0111689"/>
<dbReference type="DNASU" id="37962"/>
<dbReference type="EnsemblMetazoa" id="FBtr0112777">
    <property type="protein sequence ID" value="FBpp0111689"/>
    <property type="gene ID" value="FBgn0086908"/>
</dbReference>
<dbReference type="GeneID" id="37962"/>
<dbReference type="KEGG" id="dme:Dmel_CG12196"/>
<dbReference type="AGR" id="FB:FBgn0086908"/>
<dbReference type="CTD" id="37962"/>
<dbReference type="FlyBase" id="FBgn0086908">
    <property type="gene designation" value="egg"/>
</dbReference>
<dbReference type="VEuPathDB" id="VectorBase:FBgn0086908"/>
<dbReference type="eggNOG" id="KOG1141">
    <property type="taxonomic scope" value="Eukaryota"/>
</dbReference>
<dbReference type="GeneTree" id="ENSGT00940000169356"/>
<dbReference type="HOGENOM" id="CLU_003279_0_1_1"/>
<dbReference type="InParanoid" id="Q32KD2"/>
<dbReference type="OMA" id="LLCCDCE"/>
<dbReference type="OrthoDB" id="5792673at2759"/>
<dbReference type="PhylomeDB" id="Q32KD2"/>
<dbReference type="BRENDA" id="2.1.1.355">
    <property type="organism ID" value="1994"/>
</dbReference>
<dbReference type="Reactome" id="R-DME-3214841">
    <property type="pathway name" value="PKMTs methylate histone lysines"/>
</dbReference>
<dbReference type="Reactome" id="R-DME-9843940">
    <property type="pathway name" value="Regulation of endogenous retroelements by KRAB-ZFP proteins"/>
</dbReference>
<dbReference type="SignaLink" id="Q32KD2"/>
<dbReference type="BioGRID-ORCS" id="37962">
    <property type="hits" value="0 hits in 3 CRISPR screens"/>
</dbReference>
<dbReference type="GenomeRNAi" id="37962"/>
<dbReference type="PRO" id="PR:Q32KD2"/>
<dbReference type="Proteomes" id="UP000000803">
    <property type="component" value="Chromosome 2R"/>
</dbReference>
<dbReference type="Bgee" id="FBgn0086908">
    <property type="expression patterns" value="Expressed in eye disc (Drosophila) and 83 other cell types or tissues"/>
</dbReference>
<dbReference type="GO" id="GO:0005737">
    <property type="term" value="C:cytoplasm"/>
    <property type="evidence" value="ECO:0000314"/>
    <property type="project" value="FlyBase"/>
</dbReference>
<dbReference type="GO" id="GO:0005634">
    <property type="term" value="C:nucleus"/>
    <property type="evidence" value="ECO:0000314"/>
    <property type="project" value="FlyBase"/>
</dbReference>
<dbReference type="GO" id="GO:0005700">
    <property type="term" value="C:polytene chromosome"/>
    <property type="evidence" value="ECO:0000314"/>
    <property type="project" value="FlyBase"/>
</dbReference>
<dbReference type="GO" id="GO:0003677">
    <property type="term" value="F:DNA binding"/>
    <property type="evidence" value="ECO:0007669"/>
    <property type="project" value="InterPro"/>
</dbReference>
<dbReference type="GO" id="GO:0046974">
    <property type="term" value="F:histone H3K9 methyltransferase activity"/>
    <property type="evidence" value="ECO:0000314"/>
    <property type="project" value="FlyBase"/>
</dbReference>
<dbReference type="GO" id="GO:0140949">
    <property type="term" value="F:histone H3K9 trimethyltransferase activity"/>
    <property type="evidence" value="ECO:0007669"/>
    <property type="project" value="UniProtKB-EC"/>
</dbReference>
<dbReference type="GO" id="GO:0140947">
    <property type="term" value="F:histone H3K9me2 methyltransferase activity"/>
    <property type="evidence" value="ECO:0000314"/>
    <property type="project" value="GO_Central"/>
</dbReference>
<dbReference type="GO" id="GO:0008270">
    <property type="term" value="F:zinc ion binding"/>
    <property type="evidence" value="ECO:0007669"/>
    <property type="project" value="InterPro"/>
</dbReference>
<dbReference type="GO" id="GO:0040029">
    <property type="term" value="P:epigenetic regulation of gene expression"/>
    <property type="evidence" value="ECO:0000315"/>
    <property type="project" value="FlyBase"/>
</dbReference>
<dbReference type="GO" id="GO:0048132">
    <property type="term" value="P:female germ-line stem cell asymmetric division"/>
    <property type="evidence" value="ECO:0000314"/>
    <property type="project" value="FlyBase"/>
</dbReference>
<dbReference type="GO" id="GO:0031507">
    <property type="term" value="P:heterochromatin formation"/>
    <property type="evidence" value="ECO:0000315"/>
    <property type="project" value="FlyBase"/>
</dbReference>
<dbReference type="GO" id="GO:0070828">
    <property type="term" value="P:heterochromatin organization"/>
    <property type="evidence" value="ECO:0000315"/>
    <property type="project" value="FlyBase"/>
</dbReference>
<dbReference type="GO" id="GO:0032259">
    <property type="term" value="P:methylation"/>
    <property type="evidence" value="ECO:0007669"/>
    <property type="project" value="UniProtKB-KW"/>
</dbReference>
<dbReference type="GO" id="GO:0010629">
    <property type="term" value="P:negative regulation of gene expression"/>
    <property type="evidence" value="ECO:0000318"/>
    <property type="project" value="GO_Central"/>
</dbReference>
<dbReference type="GO" id="GO:0048477">
    <property type="term" value="P:oogenesis"/>
    <property type="evidence" value="ECO:0000314"/>
    <property type="project" value="FlyBase"/>
</dbReference>
<dbReference type="GO" id="GO:0141005">
    <property type="term" value="P:transposable element silencing by heterochromatin formation"/>
    <property type="evidence" value="ECO:0000316"/>
    <property type="project" value="FlyBase"/>
</dbReference>
<dbReference type="GO" id="GO:0141006">
    <property type="term" value="P:transposable element silencing by piRNA-mediated heterochromatin formation"/>
    <property type="evidence" value="ECO:0000315"/>
    <property type="project" value="FlyBase"/>
</dbReference>
<dbReference type="CDD" id="cd01395">
    <property type="entry name" value="HMT_MBD"/>
    <property type="match status" value="1"/>
</dbReference>
<dbReference type="CDD" id="cd10517">
    <property type="entry name" value="SET_SETDB1"/>
    <property type="match status" value="1"/>
</dbReference>
<dbReference type="CDD" id="cd20382">
    <property type="entry name" value="Tudor_SETDB1_rpt1"/>
    <property type="match status" value="1"/>
</dbReference>
<dbReference type="CDD" id="cd21181">
    <property type="entry name" value="Tudor_SETDB1_rpt2"/>
    <property type="match status" value="1"/>
</dbReference>
<dbReference type="FunFam" id="3.30.890.10:FF:000011">
    <property type="entry name" value="Histone-lysine N-methyltransferase eggless"/>
    <property type="match status" value="1"/>
</dbReference>
<dbReference type="FunFam" id="2.170.270.10:FF:000029">
    <property type="entry name" value="Histone-lysine N-methyltransferase SETDB2"/>
    <property type="match status" value="1"/>
</dbReference>
<dbReference type="Gene3D" id="2.30.30.140">
    <property type="match status" value="2"/>
</dbReference>
<dbReference type="Gene3D" id="3.30.890.10">
    <property type="entry name" value="Methyl-cpg-binding Protein 2, Chain A"/>
    <property type="match status" value="1"/>
</dbReference>
<dbReference type="Gene3D" id="2.170.270.10">
    <property type="entry name" value="SET domain"/>
    <property type="match status" value="1"/>
</dbReference>
<dbReference type="InterPro" id="IPR016177">
    <property type="entry name" value="DNA-bd_dom_sf"/>
</dbReference>
<dbReference type="InterPro" id="IPR001739">
    <property type="entry name" value="Methyl_CpG_DNA-bd"/>
</dbReference>
<dbReference type="InterPro" id="IPR003616">
    <property type="entry name" value="Post-SET_dom"/>
</dbReference>
<dbReference type="InterPro" id="IPR007728">
    <property type="entry name" value="Pre-SET_dom"/>
</dbReference>
<dbReference type="InterPro" id="IPR001214">
    <property type="entry name" value="SET_dom"/>
</dbReference>
<dbReference type="InterPro" id="IPR046341">
    <property type="entry name" value="SET_dom_sf"/>
</dbReference>
<dbReference type="InterPro" id="IPR047232">
    <property type="entry name" value="SETDB1/2-like_MBD"/>
</dbReference>
<dbReference type="InterPro" id="IPR051516">
    <property type="entry name" value="SETDB_methyltransferase"/>
</dbReference>
<dbReference type="InterPro" id="IPR041292">
    <property type="entry name" value="Tudor_4"/>
</dbReference>
<dbReference type="InterPro" id="IPR041291">
    <property type="entry name" value="TUDOR_5"/>
</dbReference>
<dbReference type="PANTHER" id="PTHR46024">
    <property type="entry name" value="HISTONE-LYSINE N-METHYLTRANSFERASE EGGLESS"/>
    <property type="match status" value="1"/>
</dbReference>
<dbReference type="PANTHER" id="PTHR46024:SF1">
    <property type="entry name" value="HISTONE-LYSINE N-METHYLTRANSFERASE EGGLESS"/>
    <property type="match status" value="1"/>
</dbReference>
<dbReference type="Pfam" id="PF01429">
    <property type="entry name" value="MBD"/>
    <property type="match status" value="1"/>
</dbReference>
<dbReference type="Pfam" id="PF05033">
    <property type="entry name" value="Pre-SET"/>
    <property type="match status" value="1"/>
</dbReference>
<dbReference type="Pfam" id="PF00856">
    <property type="entry name" value="SET"/>
    <property type="match status" value="1"/>
</dbReference>
<dbReference type="Pfam" id="PF18358">
    <property type="entry name" value="Tudor_4"/>
    <property type="match status" value="1"/>
</dbReference>
<dbReference type="Pfam" id="PF18359">
    <property type="entry name" value="Tudor_5"/>
    <property type="match status" value="1"/>
</dbReference>
<dbReference type="SMART" id="SM00391">
    <property type="entry name" value="MBD"/>
    <property type="match status" value="1"/>
</dbReference>
<dbReference type="SMART" id="SM00468">
    <property type="entry name" value="PreSET"/>
    <property type="match status" value="1"/>
</dbReference>
<dbReference type="SMART" id="SM00317">
    <property type="entry name" value="SET"/>
    <property type="match status" value="1"/>
</dbReference>
<dbReference type="SUPFAM" id="SSF54171">
    <property type="entry name" value="DNA-binding domain"/>
    <property type="match status" value="1"/>
</dbReference>
<dbReference type="SUPFAM" id="SSF82199">
    <property type="entry name" value="SET domain"/>
    <property type="match status" value="1"/>
</dbReference>
<dbReference type="PROSITE" id="PS50982">
    <property type="entry name" value="MBD"/>
    <property type="match status" value="1"/>
</dbReference>
<dbReference type="PROSITE" id="PS50868">
    <property type="entry name" value="POST_SET"/>
    <property type="match status" value="1"/>
</dbReference>
<dbReference type="PROSITE" id="PS50867">
    <property type="entry name" value="PRE_SET"/>
    <property type="match status" value="1"/>
</dbReference>
<dbReference type="PROSITE" id="PS50280">
    <property type="entry name" value="SET"/>
    <property type="match status" value="1"/>
</dbReference>
<accession>Q32KD2</accession>
<accession>Q29QW7</accession>
<accession>Q8IHC9</accession>
<accession>Q8MMD1</accession>
<accession>Q960X1</accession>
<accession>Q9W110</accession>
<organism>
    <name type="scientific">Drosophila melanogaster</name>
    <name type="common">Fruit fly</name>
    <dbReference type="NCBI Taxonomy" id="7227"/>
    <lineage>
        <taxon>Eukaryota</taxon>
        <taxon>Metazoa</taxon>
        <taxon>Ecdysozoa</taxon>
        <taxon>Arthropoda</taxon>
        <taxon>Hexapoda</taxon>
        <taxon>Insecta</taxon>
        <taxon>Pterygota</taxon>
        <taxon>Neoptera</taxon>
        <taxon>Endopterygota</taxon>
        <taxon>Diptera</taxon>
        <taxon>Brachycera</taxon>
        <taxon>Muscomorpha</taxon>
        <taxon>Ephydroidea</taxon>
        <taxon>Drosophilidae</taxon>
        <taxon>Drosophila</taxon>
        <taxon>Sophophora</taxon>
    </lineage>
</organism>
<keyword id="KW-0002">3D-structure</keyword>
<keyword id="KW-0156">Chromatin regulator</keyword>
<keyword id="KW-0158">Chromosome</keyword>
<keyword id="KW-0175">Coiled coil</keyword>
<keyword id="KW-0217">Developmental protein</keyword>
<keyword id="KW-0221">Differentiation</keyword>
<keyword id="KW-0479">Metal-binding</keyword>
<keyword id="KW-0489">Methyltransferase</keyword>
<keyword id="KW-0539">Nucleus</keyword>
<keyword id="KW-0896">Oogenesis</keyword>
<keyword id="KW-0597">Phosphoprotein</keyword>
<keyword id="KW-1185">Reference proteome</keyword>
<keyword id="KW-0677">Repeat</keyword>
<keyword id="KW-0678">Repressor</keyword>
<keyword id="KW-0949">S-adenosyl-L-methionine</keyword>
<keyword id="KW-0804">Transcription</keyword>
<keyword id="KW-0805">Transcription regulation</keyword>
<keyword id="KW-0808">Transferase</keyword>
<keyword id="KW-0862">Zinc</keyword>
<reference key="1">
    <citation type="journal article" date="2000" name="Science">
        <title>The genome sequence of Drosophila melanogaster.</title>
        <authorList>
            <person name="Adams M.D."/>
            <person name="Celniker S.E."/>
            <person name="Holt R.A."/>
            <person name="Evans C.A."/>
            <person name="Gocayne J.D."/>
            <person name="Amanatides P.G."/>
            <person name="Scherer S.E."/>
            <person name="Li P.W."/>
            <person name="Hoskins R.A."/>
            <person name="Galle R.F."/>
            <person name="George R.A."/>
            <person name="Lewis S.E."/>
            <person name="Richards S."/>
            <person name="Ashburner M."/>
            <person name="Henderson S.N."/>
            <person name="Sutton G.G."/>
            <person name="Wortman J.R."/>
            <person name="Yandell M.D."/>
            <person name="Zhang Q."/>
            <person name="Chen L.X."/>
            <person name="Brandon R.C."/>
            <person name="Rogers Y.-H.C."/>
            <person name="Blazej R.G."/>
            <person name="Champe M."/>
            <person name="Pfeiffer B.D."/>
            <person name="Wan K.H."/>
            <person name="Doyle C."/>
            <person name="Baxter E.G."/>
            <person name="Helt G."/>
            <person name="Nelson C.R."/>
            <person name="Miklos G.L.G."/>
            <person name="Abril J.F."/>
            <person name="Agbayani A."/>
            <person name="An H.-J."/>
            <person name="Andrews-Pfannkoch C."/>
            <person name="Baldwin D."/>
            <person name="Ballew R.M."/>
            <person name="Basu A."/>
            <person name="Baxendale J."/>
            <person name="Bayraktaroglu L."/>
            <person name="Beasley E.M."/>
            <person name="Beeson K.Y."/>
            <person name="Benos P.V."/>
            <person name="Berman B.P."/>
            <person name="Bhandari D."/>
            <person name="Bolshakov S."/>
            <person name="Borkova D."/>
            <person name="Botchan M.R."/>
            <person name="Bouck J."/>
            <person name="Brokstein P."/>
            <person name="Brottier P."/>
            <person name="Burtis K.C."/>
            <person name="Busam D.A."/>
            <person name="Butler H."/>
            <person name="Cadieu E."/>
            <person name="Center A."/>
            <person name="Chandra I."/>
            <person name="Cherry J.M."/>
            <person name="Cawley S."/>
            <person name="Dahlke C."/>
            <person name="Davenport L.B."/>
            <person name="Davies P."/>
            <person name="de Pablos B."/>
            <person name="Delcher A."/>
            <person name="Deng Z."/>
            <person name="Mays A.D."/>
            <person name="Dew I."/>
            <person name="Dietz S.M."/>
            <person name="Dodson K."/>
            <person name="Doup L.E."/>
            <person name="Downes M."/>
            <person name="Dugan-Rocha S."/>
            <person name="Dunkov B.C."/>
            <person name="Dunn P."/>
            <person name="Durbin K.J."/>
            <person name="Evangelista C.C."/>
            <person name="Ferraz C."/>
            <person name="Ferriera S."/>
            <person name="Fleischmann W."/>
            <person name="Fosler C."/>
            <person name="Gabrielian A.E."/>
            <person name="Garg N.S."/>
            <person name="Gelbart W.M."/>
            <person name="Glasser K."/>
            <person name="Glodek A."/>
            <person name="Gong F."/>
            <person name="Gorrell J.H."/>
            <person name="Gu Z."/>
            <person name="Guan P."/>
            <person name="Harris M."/>
            <person name="Harris N.L."/>
            <person name="Harvey D.A."/>
            <person name="Heiman T.J."/>
            <person name="Hernandez J.R."/>
            <person name="Houck J."/>
            <person name="Hostin D."/>
            <person name="Houston K.A."/>
            <person name="Howland T.J."/>
            <person name="Wei M.-H."/>
            <person name="Ibegwam C."/>
            <person name="Jalali M."/>
            <person name="Kalush F."/>
            <person name="Karpen G.H."/>
            <person name="Ke Z."/>
            <person name="Kennison J.A."/>
            <person name="Ketchum K.A."/>
            <person name="Kimmel B.E."/>
            <person name="Kodira C.D."/>
            <person name="Kraft C.L."/>
            <person name="Kravitz S."/>
            <person name="Kulp D."/>
            <person name="Lai Z."/>
            <person name="Lasko P."/>
            <person name="Lei Y."/>
            <person name="Levitsky A.A."/>
            <person name="Li J.H."/>
            <person name="Li Z."/>
            <person name="Liang Y."/>
            <person name="Lin X."/>
            <person name="Liu X."/>
            <person name="Mattei B."/>
            <person name="McIntosh T.C."/>
            <person name="McLeod M.P."/>
            <person name="McPherson D."/>
            <person name="Merkulov G."/>
            <person name="Milshina N.V."/>
            <person name="Mobarry C."/>
            <person name="Morris J."/>
            <person name="Moshrefi A."/>
            <person name="Mount S.M."/>
            <person name="Moy M."/>
            <person name="Murphy B."/>
            <person name="Murphy L."/>
            <person name="Muzny D.M."/>
            <person name="Nelson D.L."/>
            <person name="Nelson D.R."/>
            <person name="Nelson K.A."/>
            <person name="Nixon K."/>
            <person name="Nusskern D.R."/>
            <person name="Pacleb J.M."/>
            <person name="Palazzolo M."/>
            <person name="Pittman G.S."/>
            <person name="Pan S."/>
            <person name="Pollard J."/>
            <person name="Puri V."/>
            <person name="Reese M.G."/>
            <person name="Reinert K."/>
            <person name="Remington K."/>
            <person name="Saunders R.D.C."/>
            <person name="Scheeler F."/>
            <person name="Shen H."/>
            <person name="Shue B.C."/>
            <person name="Siden-Kiamos I."/>
            <person name="Simpson M."/>
            <person name="Skupski M.P."/>
            <person name="Smith T.J."/>
            <person name="Spier E."/>
            <person name="Spradling A.C."/>
            <person name="Stapleton M."/>
            <person name="Strong R."/>
            <person name="Sun E."/>
            <person name="Svirskas R."/>
            <person name="Tector C."/>
            <person name="Turner R."/>
            <person name="Venter E."/>
            <person name="Wang A.H."/>
            <person name="Wang X."/>
            <person name="Wang Z.-Y."/>
            <person name="Wassarman D.A."/>
            <person name="Weinstock G.M."/>
            <person name="Weissenbach J."/>
            <person name="Williams S.M."/>
            <person name="Woodage T."/>
            <person name="Worley K.C."/>
            <person name="Wu D."/>
            <person name="Yang S."/>
            <person name="Yao Q.A."/>
            <person name="Ye J."/>
            <person name="Yeh R.-F."/>
            <person name="Zaveri J.S."/>
            <person name="Zhan M."/>
            <person name="Zhang G."/>
            <person name="Zhao Q."/>
            <person name="Zheng L."/>
            <person name="Zheng X.H."/>
            <person name="Zhong F.N."/>
            <person name="Zhong W."/>
            <person name="Zhou X."/>
            <person name="Zhu S.C."/>
            <person name="Zhu X."/>
            <person name="Smith H.O."/>
            <person name="Gibbs R.A."/>
            <person name="Myers E.W."/>
            <person name="Rubin G.M."/>
            <person name="Venter J.C."/>
        </authorList>
    </citation>
    <scope>NUCLEOTIDE SEQUENCE [LARGE SCALE GENOMIC DNA]</scope>
    <source>
        <strain>Berkeley</strain>
    </source>
</reference>
<reference key="2">
    <citation type="journal article" date="2002" name="Genome Biol.">
        <title>Annotation of the Drosophila melanogaster euchromatic genome: a systematic review.</title>
        <authorList>
            <person name="Misra S."/>
            <person name="Crosby M.A."/>
            <person name="Mungall C.J."/>
            <person name="Matthews B.B."/>
            <person name="Campbell K.S."/>
            <person name="Hradecky P."/>
            <person name="Huang Y."/>
            <person name="Kaminker J.S."/>
            <person name="Millburn G.H."/>
            <person name="Prochnik S.E."/>
            <person name="Smith C.D."/>
            <person name="Tupy J.L."/>
            <person name="Whitfield E.J."/>
            <person name="Bayraktaroglu L."/>
            <person name="Berman B.P."/>
            <person name="Bettencourt B.R."/>
            <person name="Celniker S.E."/>
            <person name="de Grey A.D.N.J."/>
            <person name="Drysdale R.A."/>
            <person name="Harris N.L."/>
            <person name="Richter J."/>
            <person name="Russo S."/>
            <person name="Schroeder A.J."/>
            <person name="Shu S.Q."/>
            <person name="Stapleton M."/>
            <person name="Yamada C."/>
            <person name="Ashburner M."/>
            <person name="Gelbart W.M."/>
            <person name="Rubin G.M."/>
            <person name="Lewis S.E."/>
        </authorList>
    </citation>
    <scope>GENOME REANNOTATION</scope>
    <source>
        <strain>Berkeley</strain>
    </source>
</reference>
<reference key="3">
    <citation type="submission" date="2006-01" db="EMBL/GenBank/DDBJ databases">
        <authorList>
            <person name="Stapleton M."/>
            <person name="Carlson J.W."/>
            <person name="Chavez C."/>
            <person name="Frise E."/>
            <person name="George R.A."/>
            <person name="Pacleb J.M."/>
            <person name="Park S."/>
            <person name="Wan K.H."/>
            <person name="Yu C."/>
            <person name="Celniker S.E."/>
        </authorList>
    </citation>
    <scope>NUCLEOTIDE SEQUENCE [LARGE SCALE MRNA]</scope>
    <source>
        <strain>Berkeley</strain>
    </source>
</reference>
<reference key="4">
    <citation type="journal article" date="2002" name="Genome Biol.">
        <title>A Drosophila full-length cDNA resource.</title>
        <authorList>
            <person name="Stapleton M."/>
            <person name="Carlson J.W."/>
            <person name="Brokstein P."/>
            <person name="Yu C."/>
            <person name="Champe M."/>
            <person name="George R.A."/>
            <person name="Guarin H."/>
            <person name="Kronmiller B."/>
            <person name="Pacleb J.M."/>
            <person name="Park S."/>
            <person name="Wan K.H."/>
            <person name="Rubin G.M."/>
            <person name="Celniker S.E."/>
        </authorList>
    </citation>
    <scope>NUCLEOTIDE SEQUENCE [LARGE SCALE MRNA] OF 378-1262</scope>
    <source>
        <strain>Berkeley</strain>
        <tissue>Embryo</tissue>
        <tissue>Testis</tissue>
    </source>
</reference>
<reference key="5">
    <citation type="journal article" date="2007" name="Development">
        <title>Histone methylation is required for oogenesis in Drosophila.</title>
        <authorList>
            <person name="Clough E."/>
            <person name="Moon W."/>
            <person name="Wang S."/>
            <person name="Smith K."/>
            <person name="Hazelrigg T."/>
        </authorList>
    </citation>
    <scope>FUNCTION</scope>
    <scope>SUBCELLULAR LOCATION</scope>
    <scope>TISSUE SPECIFICITY</scope>
    <scope>DEVELOPMENTAL STAGE</scope>
    <scope>DISRUPTION PHENOTYPE</scope>
</reference>
<reference key="6">
    <citation type="journal article" date="2008" name="J. Proteome Res.">
        <title>Phosphoproteome analysis of Drosophila melanogaster embryos.</title>
        <authorList>
            <person name="Zhai B."/>
            <person name="Villen J."/>
            <person name="Beausoleil S.A."/>
            <person name="Mintseris J."/>
            <person name="Gygi S.P."/>
        </authorList>
    </citation>
    <scope>PHOSPHORYLATION [LARGE SCALE ANALYSIS] AT SER-215 AND THR-217</scope>
    <scope>IDENTIFICATION BY MASS SPECTROMETRY</scope>
    <source>
        <tissue>Embryo</tissue>
    </source>
</reference>
<reference key="7">
    <citation type="journal article" date="2023" name="Sci. Adv.">
        <title>The histone demethylase Kdm3 prevents auto-immune piRNAs production in Drosophila.</title>
        <authorList>
            <person name="Casier K."/>
            <person name="Autaa J."/>
            <person name="Gueguen N."/>
            <person name="Delmarre V."/>
            <person name="Marie P.P."/>
            <person name="Ronsseray S."/>
            <person name="Carre C."/>
            <person name="Brasset E."/>
            <person name="Teysset L."/>
            <person name="Boivin A."/>
        </authorList>
    </citation>
    <scope>DISRUPTION PHENOTYPE</scope>
</reference>
<reference evidence="13" key="8">
    <citation type="submission" date="2022-05" db="PDB data bank">
        <title>Drosophila melanogaster setdb1-tuor domain.</title>
        <authorList>
            <consortium name="Structural Genomics Consortium (SGC)"/>
            <person name="Zhou M."/>
            <person name="Dong A."/>
            <person name="Liu K."/>
            <person name="Arrowsmith C.H."/>
            <person name="Edwards A.M."/>
            <person name="Min J."/>
        </authorList>
    </citation>
    <scope>X-RAY CRYSTALLOGRAPHY (2.50 ANGSTROMS) OF 444-700</scope>
</reference>
<reference evidence="14" key="9">
    <citation type="submission" date="2022-05" db="PDB data bank">
        <title>Drosophila melanogaster setdb1-tuor domain with peptide H3K9me2K14ac.</title>
        <authorList>
            <consortium name="Structural Genomics Consortium (SGC)"/>
            <person name="Zhou M."/>
            <person name="Dong A."/>
            <person name="Liu K."/>
            <person name="Arrowsmith C.H."/>
            <person name="Edwards A.M."/>
            <person name="Min J."/>
        </authorList>
    </citation>
    <scope>X-RAY CRYSTALLOGRAPHY (2.30 ANGSTROMS) OF 444-700 IN COMPLEX WITH HISTONE H3</scope>
</reference>
<gene>
    <name type="primary">egg</name>
    <name type="ORF">CG12196</name>
</gene>
<evidence type="ECO:0000250" key="1"/>
<evidence type="ECO:0000255" key="2"/>
<evidence type="ECO:0000255" key="3">
    <source>
        <dbReference type="PROSITE-ProRule" id="PRU00155"/>
    </source>
</evidence>
<evidence type="ECO:0000255" key="4">
    <source>
        <dbReference type="PROSITE-ProRule" id="PRU00157"/>
    </source>
</evidence>
<evidence type="ECO:0000255" key="5">
    <source>
        <dbReference type="PROSITE-ProRule" id="PRU00190"/>
    </source>
</evidence>
<evidence type="ECO:0000255" key="6">
    <source>
        <dbReference type="PROSITE-ProRule" id="PRU00338"/>
    </source>
</evidence>
<evidence type="ECO:0000256" key="7">
    <source>
        <dbReference type="SAM" id="MobiDB-lite"/>
    </source>
</evidence>
<evidence type="ECO:0000269" key="8">
    <source>
    </source>
</evidence>
<evidence type="ECO:0000269" key="9">
    <source>
    </source>
</evidence>
<evidence type="ECO:0000269" key="10">
    <source>
    </source>
</evidence>
<evidence type="ECO:0000305" key="11"/>
<evidence type="ECO:0000305" key="12">
    <source>
    </source>
</evidence>
<evidence type="ECO:0007744" key="13">
    <source>
        <dbReference type="PDB" id="7UVE"/>
    </source>
</evidence>
<evidence type="ECO:0007744" key="14">
    <source>
        <dbReference type="PDB" id="7UW8"/>
    </source>
</evidence>
<evidence type="ECO:0007829" key="15">
    <source>
        <dbReference type="PDB" id="7UVE"/>
    </source>
</evidence>